<comment type="function">
    <text evidence="1">Specifically dimethylates two adjacent adenosines (A1518 and A1519) in the loop of a conserved hairpin near the 3'-end of 16S rRNA in the 30S particle. May play a critical role in biogenesis of 30S subunits.</text>
</comment>
<comment type="catalytic activity">
    <reaction evidence="1">
        <text>adenosine(1518)/adenosine(1519) in 16S rRNA + 4 S-adenosyl-L-methionine = N(6)-dimethyladenosine(1518)/N(6)-dimethyladenosine(1519) in 16S rRNA + 4 S-adenosyl-L-homocysteine + 4 H(+)</text>
        <dbReference type="Rhea" id="RHEA:19609"/>
        <dbReference type="Rhea" id="RHEA-COMP:10232"/>
        <dbReference type="Rhea" id="RHEA-COMP:10233"/>
        <dbReference type="ChEBI" id="CHEBI:15378"/>
        <dbReference type="ChEBI" id="CHEBI:57856"/>
        <dbReference type="ChEBI" id="CHEBI:59789"/>
        <dbReference type="ChEBI" id="CHEBI:74411"/>
        <dbReference type="ChEBI" id="CHEBI:74493"/>
        <dbReference type="EC" id="2.1.1.182"/>
    </reaction>
</comment>
<comment type="subcellular location">
    <subcellularLocation>
        <location evidence="1">Cytoplasm</location>
    </subcellularLocation>
</comment>
<comment type="similarity">
    <text evidence="1">Belongs to the class I-like SAM-binding methyltransferase superfamily. rRNA adenine N(6)-methyltransferase family. RsmA subfamily.</text>
</comment>
<proteinExistence type="inferred from homology"/>
<sequence length="273" mass="30420">MNNRVHQGHLARKRFGQNFLNDQFVIDSIVSAINPQKGQAMVEIGPGLAALTEPVGERLDKLTVIELDRDLAARLQTHPFLGPKLTIYQQDAMTFNFGELAEKMGQPLRVFGNLPYNISTPLMFHLFSYTDAIADMHFMLQKEVVNRLVAGPNSKAYGRLSVMAQYYCNVIPVLEVPPSAFTPPPKVDSAVVRLVPHATMPHPVKDVRVLSRITTEAFNQRRKTIRNSLGNLFSVEVLTGMGIDPAMRAENISVAQYCQMANYLAENAPLQES</sequence>
<keyword id="KW-0963">Cytoplasm</keyword>
<keyword id="KW-0489">Methyltransferase</keyword>
<keyword id="KW-1185">Reference proteome</keyword>
<keyword id="KW-0694">RNA-binding</keyword>
<keyword id="KW-0698">rRNA processing</keyword>
<keyword id="KW-0949">S-adenosyl-L-methionine</keyword>
<keyword id="KW-0808">Transferase</keyword>
<organism>
    <name type="scientific">Escherichia coli O139:H28 (strain E24377A / ETEC)</name>
    <dbReference type="NCBI Taxonomy" id="331111"/>
    <lineage>
        <taxon>Bacteria</taxon>
        <taxon>Pseudomonadati</taxon>
        <taxon>Pseudomonadota</taxon>
        <taxon>Gammaproteobacteria</taxon>
        <taxon>Enterobacterales</taxon>
        <taxon>Enterobacteriaceae</taxon>
        <taxon>Escherichia</taxon>
    </lineage>
</organism>
<reference key="1">
    <citation type="journal article" date="2008" name="J. Bacteriol.">
        <title>The pangenome structure of Escherichia coli: comparative genomic analysis of E. coli commensal and pathogenic isolates.</title>
        <authorList>
            <person name="Rasko D.A."/>
            <person name="Rosovitz M.J."/>
            <person name="Myers G.S.A."/>
            <person name="Mongodin E.F."/>
            <person name="Fricke W.F."/>
            <person name="Gajer P."/>
            <person name="Crabtree J."/>
            <person name="Sebaihia M."/>
            <person name="Thomson N.R."/>
            <person name="Chaudhuri R."/>
            <person name="Henderson I.R."/>
            <person name="Sperandio V."/>
            <person name="Ravel J."/>
        </authorList>
    </citation>
    <scope>NUCLEOTIDE SEQUENCE [LARGE SCALE GENOMIC DNA]</scope>
    <source>
        <strain>E24377A / ETEC</strain>
    </source>
</reference>
<evidence type="ECO:0000255" key="1">
    <source>
        <dbReference type="HAMAP-Rule" id="MF_00607"/>
    </source>
</evidence>
<name>RSMA_ECO24</name>
<feature type="chain" id="PRO_1000061282" description="Ribosomal RNA small subunit methyltransferase A">
    <location>
        <begin position="1"/>
        <end position="273"/>
    </location>
</feature>
<feature type="binding site" evidence="1">
    <location>
        <position position="18"/>
    </location>
    <ligand>
        <name>S-adenosyl-L-methionine</name>
        <dbReference type="ChEBI" id="CHEBI:59789"/>
    </ligand>
</feature>
<feature type="binding site" evidence="1">
    <location>
        <position position="20"/>
    </location>
    <ligand>
        <name>S-adenosyl-L-methionine</name>
        <dbReference type="ChEBI" id="CHEBI:59789"/>
    </ligand>
</feature>
<feature type="binding site" evidence="1">
    <location>
        <position position="45"/>
    </location>
    <ligand>
        <name>S-adenosyl-L-methionine</name>
        <dbReference type="ChEBI" id="CHEBI:59789"/>
    </ligand>
</feature>
<feature type="binding site" evidence="1">
    <location>
        <position position="66"/>
    </location>
    <ligand>
        <name>S-adenosyl-L-methionine</name>
        <dbReference type="ChEBI" id="CHEBI:59789"/>
    </ligand>
</feature>
<feature type="binding site" evidence="1">
    <location>
        <position position="91"/>
    </location>
    <ligand>
        <name>S-adenosyl-L-methionine</name>
        <dbReference type="ChEBI" id="CHEBI:59789"/>
    </ligand>
</feature>
<feature type="binding site" evidence="1">
    <location>
        <position position="113"/>
    </location>
    <ligand>
        <name>S-adenosyl-L-methionine</name>
        <dbReference type="ChEBI" id="CHEBI:59789"/>
    </ligand>
</feature>
<accession>A7ZHE4</accession>
<dbReference type="EC" id="2.1.1.182" evidence="1"/>
<dbReference type="EMBL" id="CP000800">
    <property type="protein sequence ID" value="ABV18336.1"/>
    <property type="molecule type" value="Genomic_DNA"/>
</dbReference>
<dbReference type="RefSeq" id="WP_001065361.1">
    <property type="nucleotide sequence ID" value="NC_009801.1"/>
</dbReference>
<dbReference type="SMR" id="A7ZHE4"/>
<dbReference type="KEGG" id="ecw:EcE24377A_0055"/>
<dbReference type="HOGENOM" id="CLU_041220_0_1_6"/>
<dbReference type="Proteomes" id="UP000001122">
    <property type="component" value="Chromosome"/>
</dbReference>
<dbReference type="GO" id="GO:0005829">
    <property type="term" value="C:cytosol"/>
    <property type="evidence" value="ECO:0007669"/>
    <property type="project" value="TreeGrafter"/>
</dbReference>
<dbReference type="GO" id="GO:0052908">
    <property type="term" value="F:16S rRNA (adenine(1518)-N(6)/adenine(1519)-N(6))-dimethyltransferase activity"/>
    <property type="evidence" value="ECO:0007669"/>
    <property type="project" value="UniProtKB-EC"/>
</dbReference>
<dbReference type="GO" id="GO:0003723">
    <property type="term" value="F:RNA binding"/>
    <property type="evidence" value="ECO:0007669"/>
    <property type="project" value="UniProtKB-KW"/>
</dbReference>
<dbReference type="FunFam" id="1.10.8.100:FF:000001">
    <property type="entry name" value="Ribosomal RNA small subunit methyltransferase A"/>
    <property type="match status" value="1"/>
</dbReference>
<dbReference type="FunFam" id="3.40.50.150:FF:000006">
    <property type="entry name" value="Ribosomal RNA small subunit methyltransferase A"/>
    <property type="match status" value="1"/>
</dbReference>
<dbReference type="Gene3D" id="1.10.8.100">
    <property type="entry name" value="Ribosomal RNA adenine dimethylase-like, domain 2"/>
    <property type="match status" value="1"/>
</dbReference>
<dbReference type="Gene3D" id="3.40.50.150">
    <property type="entry name" value="Vaccinia Virus protein VP39"/>
    <property type="match status" value="1"/>
</dbReference>
<dbReference type="HAMAP" id="MF_00607">
    <property type="entry name" value="16SrRNA_methyltr_A"/>
    <property type="match status" value="1"/>
</dbReference>
<dbReference type="InterPro" id="IPR001737">
    <property type="entry name" value="KsgA/Erm"/>
</dbReference>
<dbReference type="InterPro" id="IPR023165">
    <property type="entry name" value="rRNA_Ade_diMease-like_C"/>
</dbReference>
<dbReference type="InterPro" id="IPR020596">
    <property type="entry name" value="rRNA_Ade_Mease_Trfase_CS"/>
</dbReference>
<dbReference type="InterPro" id="IPR020598">
    <property type="entry name" value="rRNA_Ade_methylase_Trfase_N"/>
</dbReference>
<dbReference type="InterPro" id="IPR011530">
    <property type="entry name" value="rRNA_adenine_dimethylase"/>
</dbReference>
<dbReference type="InterPro" id="IPR029063">
    <property type="entry name" value="SAM-dependent_MTases_sf"/>
</dbReference>
<dbReference type="NCBIfam" id="TIGR00755">
    <property type="entry name" value="ksgA"/>
    <property type="match status" value="1"/>
</dbReference>
<dbReference type="PANTHER" id="PTHR11727">
    <property type="entry name" value="DIMETHYLADENOSINE TRANSFERASE"/>
    <property type="match status" value="1"/>
</dbReference>
<dbReference type="PANTHER" id="PTHR11727:SF7">
    <property type="entry name" value="DIMETHYLADENOSINE TRANSFERASE-RELATED"/>
    <property type="match status" value="1"/>
</dbReference>
<dbReference type="Pfam" id="PF00398">
    <property type="entry name" value="RrnaAD"/>
    <property type="match status" value="1"/>
</dbReference>
<dbReference type="SMART" id="SM00650">
    <property type="entry name" value="rADc"/>
    <property type="match status" value="1"/>
</dbReference>
<dbReference type="SUPFAM" id="SSF53335">
    <property type="entry name" value="S-adenosyl-L-methionine-dependent methyltransferases"/>
    <property type="match status" value="1"/>
</dbReference>
<dbReference type="PROSITE" id="PS01131">
    <property type="entry name" value="RRNA_A_DIMETH"/>
    <property type="match status" value="1"/>
</dbReference>
<dbReference type="PROSITE" id="PS51689">
    <property type="entry name" value="SAM_RNA_A_N6_MT"/>
    <property type="match status" value="1"/>
</dbReference>
<protein>
    <recommendedName>
        <fullName evidence="1">Ribosomal RNA small subunit methyltransferase A</fullName>
        <ecNumber evidence="1">2.1.1.182</ecNumber>
    </recommendedName>
    <alternativeName>
        <fullName evidence="1">16S rRNA (adenine(1518)-N(6)/adenine(1519)-N(6))-dimethyltransferase</fullName>
    </alternativeName>
    <alternativeName>
        <fullName evidence="1">16S rRNA dimethyladenosine transferase</fullName>
    </alternativeName>
    <alternativeName>
        <fullName evidence="1">16S rRNA dimethylase</fullName>
    </alternativeName>
    <alternativeName>
        <fullName evidence="1">S-adenosylmethionine-6-N', N'-adenosyl(rRNA) dimethyltransferase</fullName>
    </alternativeName>
</protein>
<gene>
    <name evidence="1" type="primary">rsmA</name>
    <name evidence="1" type="synonym">ksgA</name>
    <name type="ordered locus">EcE24377A_0055</name>
</gene>